<comment type="function">
    <text>Encapsidates the genome, protecting it from nucleases. The encapsidated genomic RNA is termed the nucleocapsid (NC) and serves as template for viral transcription and replication.</text>
</comment>
<comment type="subunit">
    <text evidence="1">Homomultimerizes to form the nucleocapsid. Binds to viral genomic RNA (By similarity).</text>
</comment>
<comment type="subcellular location">
    <subcellularLocation>
        <location>Virion</location>
    </subcellularLocation>
    <subcellularLocation>
        <location evidence="1">Host cytoplasm</location>
    </subcellularLocation>
</comment>
<comment type="similarity">
    <text evidence="2">Belongs to the ophiovirus nucleocapsid family.</text>
</comment>
<accession>Q8BCV5</accession>
<proteinExistence type="inferred from homology"/>
<feature type="chain" id="PRO_0000391502" description="Nucleoprotein">
    <location>
        <begin position="1"/>
        <end position="437"/>
    </location>
</feature>
<keyword id="KW-0167">Capsid protein</keyword>
<keyword id="KW-1139">Helical capsid protein</keyword>
<keyword id="KW-1035">Host cytoplasm</keyword>
<keyword id="KW-0687">Ribonucleoprotein</keyword>
<keyword id="KW-0694">RNA-binding</keyword>
<keyword id="KW-0543">Viral nucleoprotein</keyword>
<keyword id="KW-0946">Virion</keyword>
<sequence>MSGVYKVSEIQSILQKDVTSEGETAILISLGLMTKEEKPVPAKMAMVASAKANSIIFVSEDGSLSFEAPKETGETSKPGEKKGEKKVEVGVKFPFSAAKVKELIEGKSLTLDQDKIQKVLEEYVKNLPRTAETYKPKEIEIKCFKGVDFSISSLLSSGTKILDAILYSTYKDSAEHNFIFDVKVLSPDFIDSKLLVNNIETGNRAIKAAFCLVYNQGGLPSKTSEERPLSKFVRETIFREKDLKANELCEYLSSADPSLFPSQVFLKISLENLPTEVSSRCKMSIAGNKAMRYALLAQKFDKDEIPVPTEVNPTTSSEYMQKKEKIEKAKKIVDVLCSLASDFQAQVKMHPLSPERSSRKNFTLQLTSAIVTSLSYKGRLDMRKAIEEKKIEAFKRDENIFGRLNALGQPTFPVLTNADADFSELSVEAVKTAYGKK</sequence>
<gene>
    <name type="primary">N</name>
</gene>
<evidence type="ECO:0000250" key="1"/>
<evidence type="ECO:0000305" key="2"/>
<reference key="1">
    <citation type="journal article" date="2002" name="J. Gen. Virol.">
        <title>Nucleotide sequence and genomic organization of an ophiovirus associated with lettuce big-vein disease.</title>
        <authorList>
            <person name="Van Der Wilk F."/>
            <person name="Dullemans A.M."/>
            <person name="Verbeek M."/>
            <person name="Van Den Heuvel J.F.J.M."/>
        </authorList>
    </citation>
    <scope>NUCLEOTIDE SEQUENCE [GENOMIC RNA]</scope>
</reference>
<organismHost>
    <name type="scientific">Lactuca sativa</name>
    <name type="common">Garden lettuce</name>
    <dbReference type="NCBI Taxonomy" id="4236"/>
</organismHost>
<name>NCAP_MILVL</name>
<organism>
    <name type="scientific">Mirafiori lettuce virus (isolate Lettuce/Netherlands/LS301-O)</name>
    <name type="common">MiLV</name>
    <name type="synonym">Mirafiori lettuce big-vein virus</name>
    <dbReference type="NCBI Taxonomy" id="652964"/>
    <lineage>
        <taxon>Viruses</taxon>
        <taxon>Riboviria</taxon>
        <taxon>Orthornavirae</taxon>
        <taxon>Negarnaviricota</taxon>
        <taxon>Haploviricotina</taxon>
        <taxon>Milneviricetes</taxon>
        <taxon>Serpentovirales</taxon>
        <taxon>Aspiviridae</taxon>
        <taxon>Ophiovirus</taxon>
        <taxon>Ophiovirus mirafioriense</taxon>
    </lineage>
</organism>
<protein>
    <recommendedName>
        <fullName>Nucleoprotein</fullName>
        <shortName>NP</shortName>
    </recommendedName>
    <alternativeName>
        <fullName>Nucleocapsid protein</fullName>
        <shortName>Protein N</shortName>
    </alternativeName>
</protein>
<dbReference type="EMBL" id="AF525935">
    <property type="protein sequence ID" value="AAN60449.1"/>
    <property type="molecule type" value="Genomic_RNA"/>
</dbReference>
<dbReference type="SMR" id="Q8BCV5"/>
<dbReference type="Proteomes" id="UP000887520">
    <property type="component" value="Genome"/>
</dbReference>
<dbReference type="GO" id="GO:0019029">
    <property type="term" value="C:helical viral capsid"/>
    <property type="evidence" value="ECO:0007669"/>
    <property type="project" value="UniProtKB-KW"/>
</dbReference>
<dbReference type="GO" id="GO:0030430">
    <property type="term" value="C:host cell cytoplasm"/>
    <property type="evidence" value="ECO:0007669"/>
    <property type="project" value="UniProtKB-SubCell"/>
</dbReference>
<dbReference type="GO" id="GO:1990904">
    <property type="term" value="C:ribonucleoprotein complex"/>
    <property type="evidence" value="ECO:0007669"/>
    <property type="project" value="UniProtKB-KW"/>
</dbReference>
<dbReference type="GO" id="GO:0019013">
    <property type="term" value="C:viral nucleocapsid"/>
    <property type="evidence" value="ECO:0007669"/>
    <property type="project" value="UniProtKB-KW"/>
</dbReference>
<dbReference type="GO" id="GO:0003723">
    <property type="term" value="F:RNA binding"/>
    <property type="evidence" value="ECO:0007669"/>
    <property type="project" value="UniProtKB-KW"/>
</dbReference>
<dbReference type="InterPro" id="IPR021310">
    <property type="entry name" value="Nucleocap_ssRNA"/>
</dbReference>
<dbReference type="Pfam" id="PF11128">
    <property type="entry name" value="Nucleocap_ssRNA"/>
    <property type="match status" value="1"/>
</dbReference>